<keyword id="KW-0030">Aminoacyl-tRNA synthetase</keyword>
<keyword id="KW-0067">ATP-binding</keyword>
<keyword id="KW-0963">Cytoplasm</keyword>
<keyword id="KW-0436">Ligase</keyword>
<keyword id="KW-0479">Metal-binding</keyword>
<keyword id="KW-0547">Nucleotide-binding</keyword>
<keyword id="KW-0648">Protein biosynthesis</keyword>
<keyword id="KW-0694">RNA-binding</keyword>
<keyword id="KW-0820">tRNA-binding</keyword>
<keyword id="KW-0862">Zinc</keyword>
<evidence type="ECO:0000255" key="1">
    <source>
        <dbReference type="HAMAP-Rule" id="MF_00036"/>
    </source>
</evidence>
<organism>
    <name type="scientific">Streptococcus pyogenes serotype M5 (strain Manfredo)</name>
    <dbReference type="NCBI Taxonomy" id="160491"/>
    <lineage>
        <taxon>Bacteria</taxon>
        <taxon>Bacillati</taxon>
        <taxon>Bacillota</taxon>
        <taxon>Bacilli</taxon>
        <taxon>Lactobacillales</taxon>
        <taxon>Streptococcaceae</taxon>
        <taxon>Streptococcus</taxon>
    </lineage>
</organism>
<protein>
    <recommendedName>
        <fullName evidence="1">Alanine--tRNA ligase</fullName>
        <ecNumber evidence="1">6.1.1.7</ecNumber>
    </recommendedName>
    <alternativeName>
        <fullName evidence="1">Alanyl-tRNA synthetase</fullName>
        <shortName evidence="1">AlaRS</shortName>
    </alternativeName>
</protein>
<feature type="chain" id="PRO_0000347826" description="Alanine--tRNA ligase">
    <location>
        <begin position="1"/>
        <end position="872"/>
    </location>
</feature>
<feature type="binding site" evidence="1">
    <location>
        <position position="567"/>
    </location>
    <ligand>
        <name>Zn(2+)</name>
        <dbReference type="ChEBI" id="CHEBI:29105"/>
    </ligand>
</feature>
<feature type="binding site" evidence="1">
    <location>
        <position position="571"/>
    </location>
    <ligand>
        <name>Zn(2+)</name>
        <dbReference type="ChEBI" id="CHEBI:29105"/>
    </ligand>
</feature>
<feature type="binding site" evidence="1">
    <location>
        <position position="669"/>
    </location>
    <ligand>
        <name>Zn(2+)</name>
        <dbReference type="ChEBI" id="CHEBI:29105"/>
    </ligand>
</feature>
<feature type="binding site" evidence="1">
    <location>
        <position position="673"/>
    </location>
    <ligand>
        <name>Zn(2+)</name>
        <dbReference type="ChEBI" id="CHEBI:29105"/>
    </ligand>
</feature>
<dbReference type="EC" id="6.1.1.7" evidence="1"/>
<dbReference type="EMBL" id="AM295007">
    <property type="protein sequence ID" value="CAM30058.1"/>
    <property type="molecule type" value="Genomic_DNA"/>
</dbReference>
<dbReference type="RefSeq" id="WP_011888801.1">
    <property type="nucleotide sequence ID" value="NC_009332.1"/>
</dbReference>
<dbReference type="SMR" id="A2RDY3"/>
<dbReference type="KEGG" id="spf:SpyM50726"/>
<dbReference type="HOGENOM" id="CLU_004485_1_1_9"/>
<dbReference type="GO" id="GO:0005829">
    <property type="term" value="C:cytosol"/>
    <property type="evidence" value="ECO:0007669"/>
    <property type="project" value="TreeGrafter"/>
</dbReference>
<dbReference type="GO" id="GO:0004813">
    <property type="term" value="F:alanine-tRNA ligase activity"/>
    <property type="evidence" value="ECO:0007669"/>
    <property type="project" value="UniProtKB-UniRule"/>
</dbReference>
<dbReference type="GO" id="GO:0002161">
    <property type="term" value="F:aminoacyl-tRNA deacylase activity"/>
    <property type="evidence" value="ECO:0007669"/>
    <property type="project" value="TreeGrafter"/>
</dbReference>
<dbReference type="GO" id="GO:0005524">
    <property type="term" value="F:ATP binding"/>
    <property type="evidence" value="ECO:0007669"/>
    <property type="project" value="UniProtKB-UniRule"/>
</dbReference>
<dbReference type="GO" id="GO:0140096">
    <property type="term" value="F:catalytic activity, acting on a protein"/>
    <property type="evidence" value="ECO:0007669"/>
    <property type="project" value="UniProtKB-ARBA"/>
</dbReference>
<dbReference type="GO" id="GO:0016740">
    <property type="term" value="F:transferase activity"/>
    <property type="evidence" value="ECO:0007669"/>
    <property type="project" value="UniProtKB-ARBA"/>
</dbReference>
<dbReference type="GO" id="GO:0000049">
    <property type="term" value="F:tRNA binding"/>
    <property type="evidence" value="ECO:0007669"/>
    <property type="project" value="UniProtKB-KW"/>
</dbReference>
<dbReference type="GO" id="GO:0008270">
    <property type="term" value="F:zinc ion binding"/>
    <property type="evidence" value="ECO:0007669"/>
    <property type="project" value="UniProtKB-UniRule"/>
</dbReference>
<dbReference type="GO" id="GO:0006419">
    <property type="term" value="P:alanyl-tRNA aminoacylation"/>
    <property type="evidence" value="ECO:0007669"/>
    <property type="project" value="UniProtKB-UniRule"/>
</dbReference>
<dbReference type="CDD" id="cd00673">
    <property type="entry name" value="AlaRS_core"/>
    <property type="match status" value="1"/>
</dbReference>
<dbReference type="FunFam" id="3.10.310.40:FF:000001">
    <property type="entry name" value="Alanine--tRNA ligase"/>
    <property type="match status" value="1"/>
</dbReference>
<dbReference type="FunFam" id="3.30.54.20:FF:000001">
    <property type="entry name" value="Alanine--tRNA ligase"/>
    <property type="match status" value="1"/>
</dbReference>
<dbReference type="FunFam" id="3.30.930.10:FF:000046">
    <property type="entry name" value="Alanine--tRNA ligase"/>
    <property type="match status" value="1"/>
</dbReference>
<dbReference type="FunFam" id="3.30.980.10:FF:000004">
    <property type="entry name" value="Alanine--tRNA ligase, cytoplasmic"/>
    <property type="match status" value="1"/>
</dbReference>
<dbReference type="Gene3D" id="2.40.30.130">
    <property type="match status" value="1"/>
</dbReference>
<dbReference type="Gene3D" id="3.10.310.40">
    <property type="match status" value="1"/>
</dbReference>
<dbReference type="Gene3D" id="3.30.54.20">
    <property type="match status" value="1"/>
</dbReference>
<dbReference type="Gene3D" id="6.10.250.550">
    <property type="match status" value="1"/>
</dbReference>
<dbReference type="Gene3D" id="3.30.930.10">
    <property type="entry name" value="Bira Bifunctional Protein, Domain 2"/>
    <property type="match status" value="1"/>
</dbReference>
<dbReference type="Gene3D" id="3.30.980.10">
    <property type="entry name" value="Threonyl-trna Synthetase, Chain A, domain 2"/>
    <property type="match status" value="1"/>
</dbReference>
<dbReference type="HAMAP" id="MF_00036_B">
    <property type="entry name" value="Ala_tRNA_synth_B"/>
    <property type="match status" value="1"/>
</dbReference>
<dbReference type="InterPro" id="IPR045864">
    <property type="entry name" value="aa-tRNA-synth_II/BPL/LPL"/>
</dbReference>
<dbReference type="InterPro" id="IPR002318">
    <property type="entry name" value="Ala-tRNA-lgiase_IIc"/>
</dbReference>
<dbReference type="InterPro" id="IPR018162">
    <property type="entry name" value="Ala-tRNA-ligase_IIc_anticod-bd"/>
</dbReference>
<dbReference type="InterPro" id="IPR018165">
    <property type="entry name" value="Ala-tRNA-synth_IIc_core"/>
</dbReference>
<dbReference type="InterPro" id="IPR018164">
    <property type="entry name" value="Ala-tRNA-synth_IIc_N"/>
</dbReference>
<dbReference type="InterPro" id="IPR050058">
    <property type="entry name" value="Ala-tRNA_ligase"/>
</dbReference>
<dbReference type="InterPro" id="IPR023033">
    <property type="entry name" value="Ala_tRNA_ligase_euk/bac"/>
</dbReference>
<dbReference type="InterPro" id="IPR003156">
    <property type="entry name" value="DHHA1_dom"/>
</dbReference>
<dbReference type="InterPro" id="IPR018163">
    <property type="entry name" value="Thr/Ala-tRNA-synth_IIc_edit"/>
</dbReference>
<dbReference type="InterPro" id="IPR009000">
    <property type="entry name" value="Transl_B-barrel_sf"/>
</dbReference>
<dbReference type="InterPro" id="IPR012947">
    <property type="entry name" value="tRNA_SAD"/>
</dbReference>
<dbReference type="NCBIfam" id="TIGR00344">
    <property type="entry name" value="alaS"/>
    <property type="match status" value="1"/>
</dbReference>
<dbReference type="PANTHER" id="PTHR11777:SF9">
    <property type="entry name" value="ALANINE--TRNA LIGASE, CYTOPLASMIC"/>
    <property type="match status" value="1"/>
</dbReference>
<dbReference type="PANTHER" id="PTHR11777">
    <property type="entry name" value="ALANYL-TRNA SYNTHETASE"/>
    <property type="match status" value="1"/>
</dbReference>
<dbReference type="Pfam" id="PF02272">
    <property type="entry name" value="DHHA1"/>
    <property type="match status" value="1"/>
</dbReference>
<dbReference type="Pfam" id="PF01411">
    <property type="entry name" value="tRNA-synt_2c"/>
    <property type="match status" value="1"/>
</dbReference>
<dbReference type="Pfam" id="PF07973">
    <property type="entry name" value="tRNA_SAD"/>
    <property type="match status" value="1"/>
</dbReference>
<dbReference type="PRINTS" id="PR00980">
    <property type="entry name" value="TRNASYNTHALA"/>
</dbReference>
<dbReference type="SMART" id="SM00863">
    <property type="entry name" value="tRNA_SAD"/>
    <property type="match status" value="1"/>
</dbReference>
<dbReference type="SUPFAM" id="SSF55681">
    <property type="entry name" value="Class II aaRS and biotin synthetases"/>
    <property type="match status" value="1"/>
</dbReference>
<dbReference type="SUPFAM" id="SSF101353">
    <property type="entry name" value="Putative anticodon-binding domain of alanyl-tRNA synthetase (AlaRS)"/>
    <property type="match status" value="1"/>
</dbReference>
<dbReference type="SUPFAM" id="SSF55186">
    <property type="entry name" value="ThrRS/AlaRS common domain"/>
    <property type="match status" value="1"/>
</dbReference>
<dbReference type="SUPFAM" id="SSF50447">
    <property type="entry name" value="Translation proteins"/>
    <property type="match status" value="1"/>
</dbReference>
<dbReference type="PROSITE" id="PS50860">
    <property type="entry name" value="AA_TRNA_LIGASE_II_ALA"/>
    <property type="match status" value="1"/>
</dbReference>
<reference key="1">
    <citation type="journal article" date="2007" name="J. Bacteriol.">
        <title>Complete genome of acute rheumatic fever-associated serotype M5 Streptococcus pyogenes strain Manfredo.</title>
        <authorList>
            <person name="Holden M.T.G."/>
            <person name="Scott A."/>
            <person name="Cherevach I."/>
            <person name="Chillingworth T."/>
            <person name="Churcher C."/>
            <person name="Cronin A."/>
            <person name="Dowd L."/>
            <person name="Feltwell T."/>
            <person name="Hamlin N."/>
            <person name="Holroyd S."/>
            <person name="Jagels K."/>
            <person name="Moule S."/>
            <person name="Mungall K."/>
            <person name="Quail M.A."/>
            <person name="Price C."/>
            <person name="Rabbinowitsch E."/>
            <person name="Sharp S."/>
            <person name="Skelton J."/>
            <person name="Whitehead S."/>
            <person name="Barrell B.G."/>
            <person name="Kehoe M."/>
            <person name="Parkhill J."/>
        </authorList>
    </citation>
    <scope>NUCLEOTIDE SEQUENCE [LARGE SCALE GENOMIC DNA]</scope>
    <source>
        <strain>Manfredo</strain>
    </source>
</reference>
<sequence>MKELSSAQIRQMWLDFWKSKGHCVEPSANLVPVNDPTLLWINSGVATLKKYFDGSVITENPRITNAQKSIRTNDIENVGKTARHHTMFEMLGNFSIGDYFRDEAIEWGFELLTSPEWFDFPKDKLYMTYYPDDKDSYNRWIACGVEPSHLVPIEDNFWEIGAGPSGPDTEIFFDRGEDFDPENIGLRLLAEDIENDRYIEIWNIVLSQFNADPAVPRSEYKELPNKNIDTGAGLERLAAVMQGAKTNFETDLFMPIIREVEKLSGKTYDPDGDNMSFKVIADHIRALSFAIGDGALPGNEGRGYVLRRLLRRAVMHGRRLGINETFLYKLVLTVGQIMESYYPEVLEKRDFIEKIVKREEETFARTIDAGSGHLDSLLAQLKAEGKDTLEGKDIFKLYDTYGFPVELTEELAEDAGYKIDHEGFKSAMKEQQDRARAAVVKGGSMGMQNETLAGIVEESRFEYDTYSLESSLSVIIADNERTEAVSEGQALLVFAQTPFYAEMGGQVADTGRIKNDKGDTVAEVVDVQKAPNGQPLHTVNVLASLSVGTNYTLEINKERRLAVEKNHTATHLLHAALHNVIGEHATQAGSLNEEEFLRFDFTHFEAVSNEELRHIEQEVNEQIWNALTITTTETDVETAKEMGAMALFGEKYGKVVRVVQIGNYSVELCGGTHLNNSSEIGLFKIVKEEGIGSGTRRIIAVTGRQAFEAYRNQEDALKEIAATVKAPQLKDAAAKVQALSDSLRDFQKENAELKEKAAAAAAGDVFKDVQEAKGVRIIASQVDVADAGALRTFADNWKQKDYSDVLVLVAAIGEKVNVLVASKTKDVHAGNMIKELAPIVAGRGGGKPDMAMAGGSDASKIAELLAAVAETV</sequence>
<name>SYA_STRPG</name>
<accession>A2RDY3</accession>
<gene>
    <name evidence="1" type="primary">alaS</name>
    <name type="ordered locus">SpyM50726</name>
</gene>
<comment type="function">
    <text evidence="1">Catalyzes the attachment of alanine to tRNA(Ala) in a two-step reaction: alanine is first activated by ATP to form Ala-AMP and then transferred to the acceptor end of tRNA(Ala). Also edits incorrectly charged Ser-tRNA(Ala) and Gly-tRNA(Ala) via its editing domain.</text>
</comment>
<comment type="catalytic activity">
    <reaction evidence="1">
        <text>tRNA(Ala) + L-alanine + ATP = L-alanyl-tRNA(Ala) + AMP + diphosphate</text>
        <dbReference type="Rhea" id="RHEA:12540"/>
        <dbReference type="Rhea" id="RHEA-COMP:9657"/>
        <dbReference type="Rhea" id="RHEA-COMP:9923"/>
        <dbReference type="ChEBI" id="CHEBI:30616"/>
        <dbReference type="ChEBI" id="CHEBI:33019"/>
        <dbReference type="ChEBI" id="CHEBI:57972"/>
        <dbReference type="ChEBI" id="CHEBI:78442"/>
        <dbReference type="ChEBI" id="CHEBI:78497"/>
        <dbReference type="ChEBI" id="CHEBI:456215"/>
        <dbReference type="EC" id="6.1.1.7"/>
    </reaction>
</comment>
<comment type="cofactor">
    <cofactor evidence="1">
        <name>Zn(2+)</name>
        <dbReference type="ChEBI" id="CHEBI:29105"/>
    </cofactor>
    <text evidence="1">Binds 1 zinc ion per subunit.</text>
</comment>
<comment type="subcellular location">
    <subcellularLocation>
        <location evidence="1">Cytoplasm</location>
    </subcellularLocation>
</comment>
<comment type="domain">
    <text evidence="1">Consists of three domains; the N-terminal catalytic domain, the editing domain and the C-terminal C-Ala domain. The editing domain removes incorrectly charged amino acids, while the C-Ala domain, along with tRNA(Ala), serves as a bridge to cooperatively bring together the editing and aminoacylation centers thus stimulating deacylation of misacylated tRNAs.</text>
</comment>
<comment type="similarity">
    <text evidence="1">Belongs to the class-II aminoacyl-tRNA synthetase family.</text>
</comment>
<proteinExistence type="inferred from homology"/>